<gene>
    <name evidence="1" type="primary">rsgA</name>
    <name type="ordered locus">LCK_00514</name>
</gene>
<protein>
    <recommendedName>
        <fullName evidence="1">Small ribosomal subunit biogenesis GTPase RsgA</fullName>
        <ecNumber evidence="1">3.6.1.-</ecNumber>
    </recommendedName>
</protein>
<sequence length="301" mass="33449">MEKGRIIRSLSGYYDIETDKGKIQRTRARGEFRKSGQKPIVGDFVDFESENDDGLIWKIYPRINALVRPPIANIDIAVIVTALKEPNFAANLLDRQLVALEAAHVKPVIYFSKADLLTDEAYAAITIIAEDYRQIGYTVLLPASNNNVVARQALQSLLDGRVSVFMGQTGAGKSTLLNQLSPKLGLETGIVSKALSRGKHTTRQVTLIKVNDALIADTPGFSSYEVFDFSAEALDDYFPEFVAVRDGCRFRGCLHLNEPACAVKEAVSLGAIPESRYNSYKAFYELIKSQKPKYKTDNRNF</sequence>
<evidence type="ECO:0000255" key="1">
    <source>
        <dbReference type="HAMAP-Rule" id="MF_01820"/>
    </source>
</evidence>
<evidence type="ECO:0000255" key="2">
    <source>
        <dbReference type="PROSITE-ProRule" id="PRU01058"/>
    </source>
</evidence>
<dbReference type="EC" id="3.6.1.-" evidence="1"/>
<dbReference type="EMBL" id="DQ489736">
    <property type="protein sequence ID" value="ACA82347.1"/>
    <property type="molecule type" value="Genomic_DNA"/>
</dbReference>
<dbReference type="RefSeq" id="WP_004908064.1">
    <property type="nucleotide sequence ID" value="NC_010471.1"/>
</dbReference>
<dbReference type="SMR" id="B1MXU5"/>
<dbReference type="STRING" id="349519.LCK_00514"/>
<dbReference type="KEGG" id="lci:LCK_00514"/>
<dbReference type="eggNOG" id="COG1162">
    <property type="taxonomic scope" value="Bacteria"/>
</dbReference>
<dbReference type="HOGENOM" id="CLU_033617_2_1_9"/>
<dbReference type="OrthoDB" id="9809485at2"/>
<dbReference type="Proteomes" id="UP000002166">
    <property type="component" value="Chromosome"/>
</dbReference>
<dbReference type="GO" id="GO:0005737">
    <property type="term" value="C:cytoplasm"/>
    <property type="evidence" value="ECO:0007669"/>
    <property type="project" value="UniProtKB-SubCell"/>
</dbReference>
<dbReference type="GO" id="GO:0005525">
    <property type="term" value="F:GTP binding"/>
    <property type="evidence" value="ECO:0007669"/>
    <property type="project" value="UniProtKB-UniRule"/>
</dbReference>
<dbReference type="GO" id="GO:0003924">
    <property type="term" value="F:GTPase activity"/>
    <property type="evidence" value="ECO:0007669"/>
    <property type="project" value="UniProtKB-UniRule"/>
</dbReference>
<dbReference type="GO" id="GO:0046872">
    <property type="term" value="F:metal ion binding"/>
    <property type="evidence" value="ECO:0007669"/>
    <property type="project" value="UniProtKB-KW"/>
</dbReference>
<dbReference type="GO" id="GO:0019843">
    <property type="term" value="F:rRNA binding"/>
    <property type="evidence" value="ECO:0007669"/>
    <property type="project" value="UniProtKB-KW"/>
</dbReference>
<dbReference type="GO" id="GO:0042274">
    <property type="term" value="P:ribosomal small subunit biogenesis"/>
    <property type="evidence" value="ECO:0007669"/>
    <property type="project" value="UniProtKB-UniRule"/>
</dbReference>
<dbReference type="CDD" id="cd04466">
    <property type="entry name" value="S1_YloQ_GTPase"/>
    <property type="match status" value="1"/>
</dbReference>
<dbReference type="CDD" id="cd01854">
    <property type="entry name" value="YjeQ_EngC"/>
    <property type="match status" value="1"/>
</dbReference>
<dbReference type="Gene3D" id="2.40.50.140">
    <property type="entry name" value="Nucleic acid-binding proteins"/>
    <property type="match status" value="1"/>
</dbReference>
<dbReference type="Gene3D" id="3.40.50.300">
    <property type="entry name" value="P-loop containing nucleotide triphosphate hydrolases"/>
    <property type="match status" value="1"/>
</dbReference>
<dbReference type="Gene3D" id="1.10.40.50">
    <property type="entry name" value="Probable gtpase engc, domain 3"/>
    <property type="match status" value="1"/>
</dbReference>
<dbReference type="HAMAP" id="MF_01820">
    <property type="entry name" value="GTPase_RsgA"/>
    <property type="match status" value="1"/>
</dbReference>
<dbReference type="InterPro" id="IPR030378">
    <property type="entry name" value="G_CP_dom"/>
</dbReference>
<dbReference type="InterPro" id="IPR012340">
    <property type="entry name" value="NA-bd_OB-fold"/>
</dbReference>
<dbReference type="InterPro" id="IPR027417">
    <property type="entry name" value="P-loop_NTPase"/>
</dbReference>
<dbReference type="InterPro" id="IPR004881">
    <property type="entry name" value="Ribosome_biogen_GTPase_RsgA"/>
</dbReference>
<dbReference type="InterPro" id="IPR010914">
    <property type="entry name" value="RsgA_GTPase_dom"/>
</dbReference>
<dbReference type="InterPro" id="IPR031944">
    <property type="entry name" value="RsgA_N"/>
</dbReference>
<dbReference type="NCBIfam" id="TIGR00157">
    <property type="entry name" value="ribosome small subunit-dependent GTPase A"/>
    <property type="match status" value="1"/>
</dbReference>
<dbReference type="PANTHER" id="PTHR32120">
    <property type="entry name" value="SMALL RIBOSOMAL SUBUNIT BIOGENESIS GTPASE RSGA"/>
    <property type="match status" value="1"/>
</dbReference>
<dbReference type="PANTHER" id="PTHR32120:SF11">
    <property type="entry name" value="SMALL RIBOSOMAL SUBUNIT BIOGENESIS GTPASE RSGA 1, MITOCHONDRIAL-RELATED"/>
    <property type="match status" value="1"/>
</dbReference>
<dbReference type="Pfam" id="PF03193">
    <property type="entry name" value="RsgA_GTPase"/>
    <property type="match status" value="1"/>
</dbReference>
<dbReference type="Pfam" id="PF16745">
    <property type="entry name" value="RsgA_N"/>
    <property type="match status" value="1"/>
</dbReference>
<dbReference type="SUPFAM" id="SSF50249">
    <property type="entry name" value="Nucleic acid-binding proteins"/>
    <property type="match status" value="1"/>
</dbReference>
<dbReference type="SUPFAM" id="SSF52540">
    <property type="entry name" value="P-loop containing nucleoside triphosphate hydrolases"/>
    <property type="match status" value="1"/>
</dbReference>
<dbReference type="PROSITE" id="PS50936">
    <property type="entry name" value="ENGC_GTPASE"/>
    <property type="match status" value="1"/>
</dbReference>
<dbReference type="PROSITE" id="PS51721">
    <property type="entry name" value="G_CP"/>
    <property type="match status" value="1"/>
</dbReference>
<name>RSGA_LEUCK</name>
<organism>
    <name type="scientific">Leuconostoc citreum (strain KM20)</name>
    <dbReference type="NCBI Taxonomy" id="349519"/>
    <lineage>
        <taxon>Bacteria</taxon>
        <taxon>Bacillati</taxon>
        <taxon>Bacillota</taxon>
        <taxon>Bacilli</taxon>
        <taxon>Lactobacillales</taxon>
        <taxon>Lactobacillaceae</taxon>
        <taxon>Leuconostoc</taxon>
    </lineage>
</organism>
<accession>B1MXU5</accession>
<feature type="chain" id="PRO_1000188097" description="Small ribosomal subunit biogenesis GTPase RsgA">
    <location>
        <begin position="1"/>
        <end position="301"/>
    </location>
</feature>
<feature type="domain" description="CP-type G" evidence="2">
    <location>
        <begin position="63"/>
        <end position="224"/>
    </location>
</feature>
<feature type="binding site" evidence="1">
    <location>
        <begin position="112"/>
        <end position="115"/>
    </location>
    <ligand>
        <name>GTP</name>
        <dbReference type="ChEBI" id="CHEBI:37565"/>
    </ligand>
</feature>
<feature type="binding site" evidence="1">
    <location>
        <begin position="167"/>
        <end position="175"/>
    </location>
    <ligand>
        <name>GTP</name>
        <dbReference type="ChEBI" id="CHEBI:37565"/>
    </ligand>
</feature>
<feature type="binding site" evidence="1">
    <location>
        <position position="248"/>
    </location>
    <ligand>
        <name>Zn(2+)</name>
        <dbReference type="ChEBI" id="CHEBI:29105"/>
    </ligand>
</feature>
<feature type="binding site" evidence="1">
    <location>
        <position position="253"/>
    </location>
    <ligand>
        <name>Zn(2+)</name>
        <dbReference type="ChEBI" id="CHEBI:29105"/>
    </ligand>
</feature>
<feature type="binding site" evidence="1">
    <location>
        <position position="255"/>
    </location>
    <ligand>
        <name>Zn(2+)</name>
        <dbReference type="ChEBI" id="CHEBI:29105"/>
    </ligand>
</feature>
<feature type="binding site" evidence="1">
    <location>
        <position position="261"/>
    </location>
    <ligand>
        <name>Zn(2+)</name>
        <dbReference type="ChEBI" id="CHEBI:29105"/>
    </ligand>
</feature>
<comment type="function">
    <text evidence="1">One of several proteins that assist in the late maturation steps of the functional core of the 30S ribosomal subunit. Helps release RbfA from mature subunits. May play a role in the assembly of ribosomal proteins into the subunit. Circularly permuted GTPase that catalyzes slow GTP hydrolysis, GTPase activity is stimulated by the 30S ribosomal subunit.</text>
</comment>
<comment type="cofactor">
    <cofactor evidence="1">
        <name>Zn(2+)</name>
        <dbReference type="ChEBI" id="CHEBI:29105"/>
    </cofactor>
    <text evidence="1">Binds 1 zinc ion per subunit.</text>
</comment>
<comment type="subunit">
    <text evidence="1">Monomer. Associates with 30S ribosomal subunit, binds 16S rRNA.</text>
</comment>
<comment type="subcellular location">
    <subcellularLocation>
        <location evidence="1">Cytoplasm</location>
    </subcellularLocation>
</comment>
<comment type="similarity">
    <text evidence="1">Belongs to the TRAFAC class YlqF/YawG GTPase family. RsgA subfamily.</text>
</comment>
<keyword id="KW-0963">Cytoplasm</keyword>
<keyword id="KW-0342">GTP-binding</keyword>
<keyword id="KW-0378">Hydrolase</keyword>
<keyword id="KW-0479">Metal-binding</keyword>
<keyword id="KW-0547">Nucleotide-binding</keyword>
<keyword id="KW-1185">Reference proteome</keyword>
<keyword id="KW-0690">Ribosome biogenesis</keyword>
<keyword id="KW-0694">RNA-binding</keyword>
<keyword id="KW-0699">rRNA-binding</keyword>
<keyword id="KW-0862">Zinc</keyword>
<reference key="1">
    <citation type="journal article" date="2008" name="J. Bacteriol.">
        <title>Complete genome sequence of Leuconostoc citreum KM20.</title>
        <authorList>
            <person name="Kim J.F."/>
            <person name="Jeong H."/>
            <person name="Lee J.-S."/>
            <person name="Choi S.-H."/>
            <person name="Ha M."/>
            <person name="Hur C.-G."/>
            <person name="Kim J.-S."/>
            <person name="Lee S."/>
            <person name="Park H.-S."/>
            <person name="Park Y.-H."/>
            <person name="Oh T.K."/>
        </authorList>
    </citation>
    <scope>NUCLEOTIDE SEQUENCE [LARGE SCALE GENOMIC DNA]</scope>
    <source>
        <strain>KM20</strain>
    </source>
</reference>
<proteinExistence type="inferred from homology"/>